<proteinExistence type="inferred from homology"/>
<accession>Q7WFN4</accession>
<keyword id="KW-0131">Cell cycle</keyword>
<keyword id="KW-0132">Cell division</keyword>
<keyword id="KW-0574">Periplasm</keyword>
<keyword id="KW-0732">Signal</keyword>
<protein>
    <recommendedName>
        <fullName evidence="1">Tol-Pal system protein TolB</fullName>
    </recommendedName>
</protein>
<evidence type="ECO:0000255" key="1">
    <source>
        <dbReference type="HAMAP-Rule" id="MF_00671"/>
    </source>
</evidence>
<name>TOLB_BORBR</name>
<sequence>MPAMTPAFRRADLTGFLRTYGAALILLLAAMLAWQPAQAQLRVDISGTGATQYPVAIADFAVDDTHGRALAEVIRADLTRTGQFRLINAAGSGLNVDSQVAHDDWRAKGADFLAYGSITRGPDGRYDVRYRLADTVKKGQLDGVAFSGTEQELRRVAHQIADRIYEKITGVRGVFSTRIAYVLKRGSTYELQVADADGQNPQVALRSREPIISPSWSPDGSRLAYVSFESGKPVVYVHTLATSARIPVANFKGNNSAPAWSPDGSQLAVALTRDGLSQIYIVSAGGGSNMRRITRSPGIDTEPNFTPDGRSIIFTSDRSGGPQIYQTGLDGGDARRLTFNGGYNISPRISPDGSTLLYVARRDGAFRIASLNLSSGSETLLTDGRDDQSPSFAPNGMQVLYAAIQNGRSVLAGVSSDGRVRQTLSVLNGEIREPTWGPFTR</sequence>
<reference key="1">
    <citation type="journal article" date="2003" name="Nat. Genet.">
        <title>Comparative analysis of the genome sequences of Bordetella pertussis, Bordetella parapertussis and Bordetella bronchiseptica.</title>
        <authorList>
            <person name="Parkhill J."/>
            <person name="Sebaihia M."/>
            <person name="Preston A."/>
            <person name="Murphy L.D."/>
            <person name="Thomson N.R."/>
            <person name="Harris D.E."/>
            <person name="Holden M.T.G."/>
            <person name="Churcher C.M."/>
            <person name="Bentley S.D."/>
            <person name="Mungall K.L."/>
            <person name="Cerdeno-Tarraga A.-M."/>
            <person name="Temple L."/>
            <person name="James K.D."/>
            <person name="Harris B."/>
            <person name="Quail M.A."/>
            <person name="Achtman M."/>
            <person name="Atkin R."/>
            <person name="Baker S."/>
            <person name="Basham D."/>
            <person name="Bason N."/>
            <person name="Cherevach I."/>
            <person name="Chillingworth T."/>
            <person name="Collins M."/>
            <person name="Cronin A."/>
            <person name="Davis P."/>
            <person name="Doggett J."/>
            <person name="Feltwell T."/>
            <person name="Goble A."/>
            <person name="Hamlin N."/>
            <person name="Hauser H."/>
            <person name="Holroyd S."/>
            <person name="Jagels K."/>
            <person name="Leather S."/>
            <person name="Moule S."/>
            <person name="Norberczak H."/>
            <person name="O'Neil S."/>
            <person name="Ormond D."/>
            <person name="Price C."/>
            <person name="Rabbinowitsch E."/>
            <person name="Rutter S."/>
            <person name="Sanders M."/>
            <person name="Saunders D."/>
            <person name="Seeger K."/>
            <person name="Sharp S."/>
            <person name="Simmonds M."/>
            <person name="Skelton J."/>
            <person name="Squares R."/>
            <person name="Squares S."/>
            <person name="Stevens K."/>
            <person name="Unwin L."/>
            <person name="Whitehead S."/>
            <person name="Barrell B.G."/>
            <person name="Maskell D.J."/>
        </authorList>
    </citation>
    <scope>NUCLEOTIDE SEQUENCE [LARGE SCALE GENOMIC DNA]</scope>
    <source>
        <strain>ATCC BAA-588 / NCTC 13252 / RB50</strain>
    </source>
</reference>
<feature type="signal peptide" evidence="1">
    <location>
        <begin position="1"/>
        <end position="39"/>
    </location>
</feature>
<feature type="chain" id="PRO_0000034626" description="Tol-Pal system protein TolB" evidence="1">
    <location>
        <begin position="40"/>
        <end position="441"/>
    </location>
</feature>
<gene>
    <name evidence="1" type="primary">tolB</name>
    <name type="ordered locus">BB4237</name>
</gene>
<dbReference type="EMBL" id="BX640449">
    <property type="protein sequence ID" value="CAE34601.1"/>
    <property type="molecule type" value="Genomic_DNA"/>
</dbReference>
<dbReference type="SMR" id="Q7WFN4"/>
<dbReference type="KEGG" id="bbr:BB4237"/>
<dbReference type="eggNOG" id="COG0823">
    <property type="taxonomic scope" value="Bacteria"/>
</dbReference>
<dbReference type="HOGENOM" id="CLU_047123_0_0_4"/>
<dbReference type="Proteomes" id="UP000001027">
    <property type="component" value="Chromosome"/>
</dbReference>
<dbReference type="GO" id="GO:0042597">
    <property type="term" value="C:periplasmic space"/>
    <property type="evidence" value="ECO:0007669"/>
    <property type="project" value="UniProtKB-SubCell"/>
</dbReference>
<dbReference type="GO" id="GO:0051301">
    <property type="term" value="P:cell division"/>
    <property type="evidence" value="ECO:0007669"/>
    <property type="project" value="UniProtKB-UniRule"/>
</dbReference>
<dbReference type="GO" id="GO:0017038">
    <property type="term" value="P:protein import"/>
    <property type="evidence" value="ECO:0007669"/>
    <property type="project" value="InterPro"/>
</dbReference>
<dbReference type="Gene3D" id="2.120.10.30">
    <property type="entry name" value="TolB, C-terminal domain"/>
    <property type="match status" value="1"/>
</dbReference>
<dbReference type="Gene3D" id="3.40.50.10070">
    <property type="entry name" value="TolB, N-terminal domain"/>
    <property type="match status" value="1"/>
</dbReference>
<dbReference type="HAMAP" id="MF_00671">
    <property type="entry name" value="TolB"/>
    <property type="match status" value="1"/>
</dbReference>
<dbReference type="InterPro" id="IPR011042">
    <property type="entry name" value="6-blade_b-propeller_TolB-like"/>
</dbReference>
<dbReference type="InterPro" id="IPR011659">
    <property type="entry name" value="PD40"/>
</dbReference>
<dbReference type="InterPro" id="IPR014167">
    <property type="entry name" value="Tol-Pal_TolB"/>
</dbReference>
<dbReference type="InterPro" id="IPR007195">
    <property type="entry name" value="TolB_N"/>
</dbReference>
<dbReference type="NCBIfam" id="TIGR02800">
    <property type="entry name" value="propeller_TolB"/>
    <property type="match status" value="1"/>
</dbReference>
<dbReference type="PANTHER" id="PTHR36842:SF1">
    <property type="entry name" value="PROTEIN TOLB"/>
    <property type="match status" value="1"/>
</dbReference>
<dbReference type="PANTHER" id="PTHR36842">
    <property type="entry name" value="PROTEIN TOLB HOMOLOG"/>
    <property type="match status" value="1"/>
</dbReference>
<dbReference type="Pfam" id="PF07676">
    <property type="entry name" value="PD40"/>
    <property type="match status" value="4"/>
</dbReference>
<dbReference type="Pfam" id="PF04052">
    <property type="entry name" value="TolB_N"/>
    <property type="match status" value="1"/>
</dbReference>
<dbReference type="SUPFAM" id="SSF52964">
    <property type="entry name" value="TolB, N-terminal domain"/>
    <property type="match status" value="1"/>
</dbReference>
<dbReference type="SUPFAM" id="SSF69304">
    <property type="entry name" value="Tricorn protease N-terminal domain"/>
    <property type="match status" value="1"/>
</dbReference>
<organism>
    <name type="scientific">Bordetella bronchiseptica (strain ATCC BAA-588 / NCTC 13252 / RB50)</name>
    <name type="common">Alcaligenes bronchisepticus</name>
    <dbReference type="NCBI Taxonomy" id="257310"/>
    <lineage>
        <taxon>Bacteria</taxon>
        <taxon>Pseudomonadati</taxon>
        <taxon>Pseudomonadota</taxon>
        <taxon>Betaproteobacteria</taxon>
        <taxon>Burkholderiales</taxon>
        <taxon>Alcaligenaceae</taxon>
        <taxon>Bordetella</taxon>
    </lineage>
</organism>
<comment type="function">
    <text evidence="1">Part of the Tol-Pal system, which plays a role in outer membrane invagination during cell division and is important for maintaining outer membrane integrity.</text>
</comment>
<comment type="subunit">
    <text evidence="1">The Tol-Pal system is composed of five core proteins: the inner membrane proteins TolA, TolQ and TolR, the periplasmic protein TolB and the outer membrane protein Pal. They form a network linking the inner and outer membranes and the peptidoglycan layer.</text>
</comment>
<comment type="subcellular location">
    <subcellularLocation>
        <location evidence="1">Periplasm</location>
    </subcellularLocation>
</comment>
<comment type="similarity">
    <text evidence="1">Belongs to the TolB family.</text>
</comment>